<comment type="function">
    <text evidence="1">Bifunctional enzyme with both catalase and broad-spectrum peroxidase activity.</text>
</comment>
<comment type="catalytic activity">
    <reaction evidence="1">
        <text>H2O2 + AH2 = A + 2 H2O</text>
        <dbReference type="Rhea" id="RHEA:30275"/>
        <dbReference type="ChEBI" id="CHEBI:13193"/>
        <dbReference type="ChEBI" id="CHEBI:15377"/>
        <dbReference type="ChEBI" id="CHEBI:16240"/>
        <dbReference type="ChEBI" id="CHEBI:17499"/>
        <dbReference type="EC" id="1.11.1.21"/>
    </reaction>
</comment>
<comment type="catalytic activity">
    <reaction evidence="1">
        <text>2 H2O2 = O2 + 2 H2O</text>
        <dbReference type="Rhea" id="RHEA:20309"/>
        <dbReference type="ChEBI" id="CHEBI:15377"/>
        <dbReference type="ChEBI" id="CHEBI:15379"/>
        <dbReference type="ChEBI" id="CHEBI:16240"/>
        <dbReference type="EC" id="1.11.1.21"/>
    </reaction>
</comment>
<comment type="cofactor">
    <cofactor evidence="1">
        <name>heme b</name>
        <dbReference type="ChEBI" id="CHEBI:60344"/>
    </cofactor>
    <text evidence="1">Binds 1 heme b (iron(II)-protoporphyrin IX) group per dimer.</text>
</comment>
<comment type="subunit">
    <text evidence="1">Homodimer or homotetramer.</text>
</comment>
<comment type="PTM">
    <text evidence="1">Formation of the three residue Trp-Tyr-Met cross-link is important for the catalase, but not the peroxidase activity of the enzyme.</text>
</comment>
<comment type="similarity">
    <text evidence="1">Belongs to the peroxidase family. Peroxidase/catalase subfamily.</text>
</comment>
<comment type="sequence caution" evidence="2">
    <conflict type="erroneous initiation">
        <sequence resource="EMBL-CDS" id="AAU28450"/>
    </conflict>
</comment>
<dbReference type="EC" id="1.11.1.21" evidence="1"/>
<dbReference type="EMBL" id="AE017354">
    <property type="protein sequence ID" value="AAU28450.1"/>
    <property type="status" value="ALT_INIT"/>
    <property type="molecule type" value="Genomic_DNA"/>
</dbReference>
<dbReference type="RefSeq" id="YP_096397.1">
    <property type="nucleotide sequence ID" value="NC_002942.5"/>
</dbReference>
<dbReference type="SMR" id="Q5ZSX7"/>
<dbReference type="STRING" id="272624.lpg2389"/>
<dbReference type="PeroxiBase" id="2643">
    <property type="entry name" value="LpnCP02_Philadelphia-1"/>
</dbReference>
<dbReference type="PaxDb" id="272624-lpg2389"/>
<dbReference type="KEGG" id="lpn:lpg2389"/>
<dbReference type="PATRIC" id="fig|272624.6.peg.2525"/>
<dbReference type="eggNOG" id="COG0376">
    <property type="taxonomic scope" value="Bacteria"/>
</dbReference>
<dbReference type="HOGENOM" id="CLU_025424_2_0_6"/>
<dbReference type="OrthoDB" id="9759743at2"/>
<dbReference type="Proteomes" id="UP000000609">
    <property type="component" value="Chromosome"/>
</dbReference>
<dbReference type="GO" id="GO:0005829">
    <property type="term" value="C:cytosol"/>
    <property type="evidence" value="ECO:0007669"/>
    <property type="project" value="TreeGrafter"/>
</dbReference>
<dbReference type="GO" id="GO:0004096">
    <property type="term" value="F:catalase activity"/>
    <property type="evidence" value="ECO:0007669"/>
    <property type="project" value="UniProtKB-UniRule"/>
</dbReference>
<dbReference type="GO" id="GO:0020037">
    <property type="term" value="F:heme binding"/>
    <property type="evidence" value="ECO:0007669"/>
    <property type="project" value="InterPro"/>
</dbReference>
<dbReference type="GO" id="GO:0046872">
    <property type="term" value="F:metal ion binding"/>
    <property type="evidence" value="ECO:0007669"/>
    <property type="project" value="UniProtKB-KW"/>
</dbReference>
<dbReference type="GO" id="GO:0070301">
    <property type="term" value="P:cellular response to hydrogen peroxide"/>
    <property type="evidence" value="ECO:0007669"/>
    <property type="project" value="TreeGrafter"/>
</dbReference>
<dbReference type="GO" id="GO:0042744">
    <property type="term" value="P:hydrogen peroxide catabolic process"/>
    <property type="evidence" value="ECO:0007669"/>
    <property type="project" value="UniProtKB-KW"/>
</dbReference>
<dbReference type="CDD" id="cd00649">
    <property type="entry name" value="catalase_peroxidase_1"/>
    <property type="match status" value="1"/>
</dbReference>
<dbReference type="FunFam" id="1.10.420.10:FF:000004">
    <property type="entry name" value="Catalase-peroxidase"/>
    <property type="match status" value="1"/>
</dbReference>
<dbReference type="FunFam" id="1.10.520.10:FF:000002">
    <property type="entry name" value="Catalase-peroxidase"/>
    <property type="match status" value="1"/>
</dbReference>
<dbReference type="Gene3D" id="1.10.520.10">
    <property type="match status" value="2"/>
</dbReference>
<dbReference type="Gene3D" id="1.10.420.10">
    <property type="entry name" value="Peroxidase, domain 2"/>
    <property type="match status" value="2"/>
</dbReference>
<dbReference type="HAMAP" id="MF_01961">
    <property type="entry name" value="Catal_peroxid"/>
    <property type="match status" value="1"/>
</dbReference>
<dbReference type="InterPro" id="IPR000763">
    <property type="entry name" value="Catalase_peroxidase"/>
</dbReference>
<dbReference type="InterPro" id="IPR002016">
    <property type="entry name" value="Haem_peroxidase"/>
</dbReference>
<dbReference type="InterPro" id="IPR010255">
    <property type="entry name" value="Haem_peroxidase_sf"/>
</dbReference>
<dbReference type="InterPro" id="IPR019794">
    <property type="entry name" value="Peroxidases_AS"/>
</dbReference>
<dbReference type="NCBIfam" id="TIGR00198">
    <property type="entry name" value="cat_per_HPI"/>
    <property type="match status" value="1"/>
</dbReference>
<dbReference type="NCBIfam" id="NF011635">
    <property type="entry name" value="PRK15061.1"/>
    <property type="match status" value="1"/>
</dbReference>
<dbReference type="PANTHER" id="PTHR30555:SF6">
    <property type="entry name" value="CATALASE-PEROXIDASE"/>
    <property type="match status" value="1"/>
</dbReference>
<dbReference type="PANTHER" id="PTHR30555">
    <property type="entry name" value="HYDROPEROXIDASE I, BIFUNCTIONAL CATALASE-PEROXIDASE"/>
    <property type="match status" value="1"/>
</dbReference>
<dbReference type="Pfam" id="PF00141">
    <property type="entry name" value="peroxidase"/>
    <property type="match status" value="2"/>
</dbReference>
<dbReference type="PRINTS" id="PR00460">
    <property type="entry name" value="BPEROXIDASE"/>
</dbReference>
<dbReference type="PRINTS" id="PR00458">
    <property type="entry name" value="PEROXIDASE"/>
</dbReference>
<dbReference type="SUPFAM" id="SSF48113">
    <property type="entry name" value="Heme-dependent peroxidases"/>
    <property type="match status" value="2"/>
</dbReference>
<dbReference type="PROSITE" id="PS00436">
    <property type="entry name" value="PEROXIDASE_2"/>
    <property type="match status" value="1"/>
</dbReference>
<dbReference type="PROSITE" id="PS50873">
    <property type="entry name" value="PEROXIDASE_4"/>
    <property type="match status" value="1"/>
</dbReference>
<proteinExistence type="inferred from homology"/>
<accession>Q5ZSX7</accession>
<keyword id="KW-0349">Heme</keyword>
<keyword id="KW-0376">Hydrogen peroxide</keyword>
<keyword id="KW-0408">Iron</keyword>
<keyword id="KW-0479">Metal-binding</keyword>
<keyword id="KW-0560">Oxidoreductase</keyword>
<keyword id="KW-0575">Peroxidase</keyword>
<keyword id="KW-1185">Reference proteome</keyword>
<feature type="chain" id="PRO_0000354822" description="Catalase-peroxidase 1">
    <location>
        <begin position="1"/>
        <end position="721"/>
    </location>
</feature>
<feature type="active site" description="Proton acceptor" evidence="1">
    <location>
        <position position="99"/>
    </location>
</feature>
<feature type="binding site" description="axial binding residue" evidence="1">
    <location>
        <position position="264"/>
    </location>
    <ligand>
        <name>heme b</name>
        <dbReference type="ChEBI" id="CHEBI:60344"/>
    </ligand>
    <ligandPart>
        <name>Fe</name>
        <dbReference type="ChEBI" id="CHEBI:18248"/>
    </ligandPart>
</feature>
<feature type="site" description="Transition state stabilizer" evidence="1">
    <location>
        <position position="95"/>
    </location>
</feature>
<feature type="cross-link" description="Tryptophyl-tyrosyl-methioninium (Trp-Tyr) (with M-249)" evidence="1">
    <location>
        <begin position="98"/>
        <end position="223"/>
    </location>
</feature>
<feature type="cross-link" description="Tryptophyl-tyrosyl-methioninium (Tyr-Met) (with W-98)" evidence="1">
    <location>
        <begin position="223"/>
        <end position="249"/>
    </location>
</feature>
<organism>
    <name type="scientific">Legionella pneumophila subsp. pneumophila (strain Philadelphia 1 / ATCC 33152 / DSM 7513)</name>
    <dbReference type="NCBI Taxonomy" id="272624"/>
    <lineage>
        <taxon>Bacteria</taxon>
        <taxon>Pseudomonadati</taxon>
        <taxon>Pseudomonadota</taxon>
        <taxon>Gammaproteobacteria</taxon>
        <taxon>Legionellales</taxon>
        <taxon>Legionellaceae</taxon>
        <taxon>Legionella</taxon>
    </lineage>
</organism>
<evidence type="ECO:0000255" key="1">
    <source>
        <dbReference type="HAMAP-Rule" id="MF_01961"/>
    </source>
</evidence>
<evidence type="ECO:0000305" key="2"/>
<name>KATG1_LEGPH</name>
<gene>
    <name evidence="1" type="primary">katG1</name>
    <name type="ordered locus">lpg2389</name>
</gene>
<reference key="1">
    <citation type="journal article" date="2004" name="Science">
        <title>The genomic sequence of the accidental pathogen Legionella pneumophila.</title>
        <authorList>
            <person name="Chien M."/>
            <person name="Morozova I."/>
            <person name="Shi S."/>
            <person name="Sheng H."/>
            <person name="Chen J."/>
            <person name="Gomez S.M."/>
            <person name="Asamani G."/>
            <person name="Hill K."/>
            <person name="Nuara J."/>
            <person name="Feder M."/>
            <person name="Rineer J."/>
            <person name="Greenberg J.J."/>
            <person name="Steshenko V."/>
            <person name="Park S.H."/>
            <person name="Zhao B."/>
            <person name="Teplitskaya E."/>
            <person name="Edwards J.R."/>
            <person name="Pampou S."/>
            <person name="Georghiou A."/>
            <person name="Chou I.-C."/>
            <person name="Iannuccilli W."/>
            <person name="Ulz M.E."/>
            <person name="Kim D.H."/>
            <person name="Geringer-Sameth A."/>
            <person name="Goldsberry C."/>
            <person name="Morozov P."/>
            <person name="Fischer S.G."/>
            <person name="Segal G."/>
            <person name="Qu X."/>
            <person name="Rzhetsky A."/>
            <person name="Zhang P."/>
            <person name="Cayanis E."/>
            <person name="De Jong P.J."/>
            <person name="Ju J."/>
            <person name="Kalachikov S."/>
            <person name="Shuman H.A."/>
            <person name="Russo J.J."/>
        </authorList>
    </citation>
    <scope>NUCLEOTIDE SEQUENCE [LARGE SCALE GENOMIC DNA]</scope>
    <source>
        <strain>Philadelphia 1 / ATCC 33152 / DSM 7513</strain>
    </source>
</reference>
<sequence length="721" mass="80500">MDGKVGSTTTGCPVIHGGMTSTGTSNTAWWPNALNLDILHQHDTKTNPMEKDFNYREEVKKLDFEALKKDLHALMTDSQAWWPADWGHYGGLMIRMSWHAAGSYRVADGRGGAGTGNQRFAPLNSWPDNVNLDKARRLLWPIKKKYGNKISWADLIVLAGTIAYESMGLKTFGFGFGREDIWHPEKDVYWGSEQEWLGAKRYDGKSRESLENPLAAVQMGLIYVNPEGVNGQPDPLRTAQDVRVTFGRMAMNDEETVALTAGGHTVGKCHGNGNAKLLGPNPEAANVEDQGLGWINKTTRGIGRNTVSSGIEGAWTTHPTQWDNGYFYLLLNYDWELKKSPAGAWQWEPIHIKEEDKPVDVEDPAIRHNPIMTDADMAMKMDPVYRKIAERFYQDPDYFAEVFARAWFKLTHRDMGPKTRYIGPDVPKEDLIWQDPVPAGNRAYDIAAAKAKIAASNLTIGEMVSTAWDSARTFRGSDKRGGANGARIRLKPQKDWEGNEPQRLTKVLQILEDIATDTGASVADVIILAGNVGIEKAAKAAGFDIIVPFAPGRGDATDDMTDAESFDVLEPLHDGYRNWLKKTYDVRPEELMLDRTQLMGLTAHEMTVLVGGLRVLGTNHNNTQYGVFTDRVGALTNDFFVNLTDMANVWIPSKDNLYEIRDRKAGNIKWTATRVDLVFGSNSILRSYAEVYAQDDNKGKFIQDFVAAWTKVMNADRFDLA</sequence>
<protein>
    <recommendedName>
        <fullName evidence="1">Catalase-peroxidase 1</fullName>
        <shortName evidence="1">CP 1</shortName>
        <ecNumber evidence="1">1.11.1.21</ecNumber>
    </recommendedName>
    <alternativeName>
        <fullName evidence="1">Peroxidase/catalase 1</fullName>
    </alternativeName>
</protein>